<dbReference type="EC" id="2.1.1.n11" evidence="5"/>
<dbReference type="EC" id="2.1.1.63" evidence="5"/>
<dbReference type="EMBL" id="M10211">
    <property type="protein sequence ID" value="AAA23412.1"/>
    <property type="molecule type" value="Genomic_DNA"/>
</dbReference>
<dbReference type="EMBL" id="M10315">
    <property type="protein sequence ID" value="AAA23413.1"/>
    <property type="molecule type" value="Genomic_DNA"/>
</dbReference>
<dbReference type="EMBL" id="U00008">
    <property type="protein sequence ID" value="AAA16408.1"/>
    <property type="molecule type" value="Genomic_DNA"/>
</dbReference>
<dbReference type="EMBL" id="U00096">
    <property type="protein sequence ID" value="AAC75273.1"/>
    <property type="molecule type" value="Genomic_DNA"/>
</dbReference>
<dbReference type="EMBL" id="AP009048">
    <property type="protein sequence ID" value="BAA15996.1"/>
    <property type="molecule type" value="Genomic_DNA"/>
</dbReference>
<dbReference type="EMBL" id="J02607">
    <property type="protein sequence ID" value="AAA23415.1"/>
    <property type="molecule type" value="Genomic_DNA"/>
</dbReference>
<dbReference type="EMBL" id="M13155">
    <property type="protein sequence ID" value="AAA23418.1"/>
    <property type="molecule type" value="Genomic_DNA"/>
</dbReference>
<dbReference type="EMBL" id="M13828">
    <property type="protein sequence ID" value="AAA23417.1"/>
    <property type="molecule type" value="Genomic_DNA"/>
</dbReference>
<dbReference type="PIR" id="C64991">
    <property type="entry name" value="XYECO2"/>
</dbReference>
<dbReference type="RefSeq" id="NP_416717.1">
    <property type="nucleotide sequence ID" value="NC_000913.3"/>
</dbReference>
<dbReference type="RefSeq" id="WP_000710375.1">
    <property type="nucleotide sequence ID" value="NZ_LN832404.1"/>
</dbReference>
<dbReference type="PDB" id="1ADN">
    <property type="method" value="NMR"/>
    <property type="chains" value="A=1-92"/>
</dbReference>
<dbReference type="PDB" id="1EYF">
    <property type="method" value="NMR"/>
    <property type="chains" value="A=1-92"/>
</dbReference>
<dbReference type="PDB" id="1SFE">
    <property type="method" value="X-ray"/>
    <property type="resolution" value="2.10 A"/>
    <property type="chains" value="A=175-354"/>
</dbReference>
<dbReference type="PDB" id="1U8B">
    <property type="method" value="X-ray"/>
    <property type="resolution" value="2.10 A"/>
    <property type="chains" value="A=9-139"/>
</dbReference>
<dbReference type="PDB" id="1WPK">
    <property type="method" value="NMR"/>
    <property type="chains" value="A=1-146"/>
</dbReference>
<dbReference type="PDB" id="1ZGW">
    <property type="method" value="NMR"/>
    <property type="chains" value="A=1-139"/>
</dbReference>
<dbReference type="PDBsum" id="1ADN"/>
<dbReference type="PDBsum" id="1EYF"/>
<dbReference type="PDBsum" id="1SFE"/>
<dbReference type="PDBsum" id="1U8B"/>
<dbReference type="PDBsum" id="1WPK"/>
<dbReference type="PDBsum" id="1ZGW"/>
<dbReference type="SMR" id="P06134"/>
<dbReference type="BioGRID" id="4261923">
    <property type="interactions" value="265"/>
</dbReference>
<dbReference type="BioGRID" id="851051">
    <property type="interactions" value="4"/>
</dbReference>
<dbReference type="DIP" id="DIP-9055N"/>
<dbReference type="FunCoup" id="P06134">
    <property type="interactions" value="104"/>
</dbReference>
<dbReference type="IntAct" id="P06134">
    <property type="interactions" value="13"/>
</dbReference>
<dbReference type="STRING" id="511145.b2213"/>
<dbReference type="jPOST" id="P06134"/>
<dbReference type="PaxDb" id="511145-b2213"/>
<dbReference type="EnsemblBacteria" id="AAC75273">
    <property type="protein sequence ID" value="AAC75273"/>
    <property type="gene ID" value="b2213"/>
</dbReference>
<dbReference type="GeneID" id="946710"/>
<dbReference type="KEGG" id="ecj:JW2201"/>
<dbReference type="KEGG" id="eco:b2213"/>
<dbReference type="KEGG" id="ecoc:C3026_12365"/>
<dbReference type="PATRIC" id="fig|1411691.4.peg.22"/>
<dbReference type="EchoBASE" id="EB0028"/>
<dbReference type="eggNOG" id="COG0350">
    <property type="taxonomic scope" value="Bacteria"/>
</dbReference>
<dbReference type="eggNOG" id="COG2169">
    <property type="taxonomic scope" value="Bacteria"/>
</dbReference>
<dbReference type="HOGENOM" id="CLU_000445_52_0_6"/>
<dbReference type="InParanoid" id="P06134"/>
<dbReference type="OMA" id="RFAIGQC"/>
<dbReference type="OrthoDB" id="9802228at2"/>
<dbReference type="PhylomeDB" id="P06134"/>
<dbReference type="BioCyc" id="EcoCyc:PD00230"/>
<dbReference type="BioCyc" id="MetaCyc:PD00230"/>
<dbReference type="EvolutionaryTrace" id="P06134"/>
<dbReference type="PRO" id="PR:P06134"/>
<dbReference type="Proteomes" id="UP000000625">
    <property type="component" value="Chromosome"/>
</dbReference>
<dbReference type="GO" id="GO:0003700">
    <property type="term" value="F:DNA-binding transcription factor activity"/>
    <property type="evidence" value="ECO:0000304"/>
    <property type="project" value="EcoCyc"/>
</dbReference>
<dbReference type="GO" id="GO:0003908">
    <property type="term" value="F:methylated-DNA-[protein]-cysteine S-methyltransferase activity"/>
    <property type="evidence" value="ECO:0000314"/>
    <property type="project" value="EcoCyc"/>
</dbReference>
<dbReference type="GO" id="GO:0043565">
    <property type="term" value="F:sequence-specific DNA binding"/>
    <property type="evidence" value="ECO:0007669"/>
    <property type="project" value="InterPro"/>
</dbReference>
<dbReference type="GO" id="GO:0008270">
    <property type="term" value="F:zinc ion binding"/>
    <property type="evidence" value="ECO:0000314"/>
    <property type="project" value="EcoliWiki"/>
</dbReference>
<dbReference type="GO" id="GO:0006307">
    <property type="term" value="P:DNA alkylation repair"/>
    <property type="evidence" value="ECO:0000269"/>
    <property type="project" value="EcoCyc"/>
</dbReference>
<dbReference type="GO" id="GO:0006974">
    <property type="term" value="P:DNA damage response"/>
    <property type="evidence" value="ECO:0000270"/>
    <property type="project" value="EcoCyc"/>
</dbReference>
<dbReference type="GO" id="GO:0032259">
    <property type="term" value="P:methylation"/>
    <property type="evidence" value="ECO:0007669"/>
    <property type="project" value="UniProtKB-KW"/>
</dbReference>
<dbReference type="GO" id="GO:0045892">
    <property type="term" value="P:negative regulation of DNA-templated transcription"/>
    <property type="evidence" value="ECO:0000314"/>
    <property type="project" value="EcoCyc"/>
</dbReference>
<dbReference type="GO" id="GO:0045893">
    <property type="term" value="P:positive regulation of DNA-templated transcription"/>
    <property type="evidence" value="ECO:0000314"/>
    <property type="project" value="EcoCyc"/>
</dbReference>
<dbReference type="CDD" id="cd06445">
    <property type="entry name" value="ATase"/>
    <property type="match status" value="1"/>
</dbReference>
<dbReference type="FunFam" id="1.10.10.10:FF:000410">
    <property type="entry name" value="ADA regulatory protein, putative"/>
    <property type="match status" value="1"/>
</dbReference>
<dbReference type="FunFam" id="3.30.160.70:FF:000002">
    <property type="entry name" value="Bifunctional transcriptional activator/DNA repair enzyme Ada"/>
    <property type="match status" value="1"/>
</dbReference>
<dbReference type="FunFam" id="3.40.10.10:FF:000001">
    <property type="entry name" value="DNA-3-methyladenine glycosylase 2"/>
    <property type="match status" value="1"/>
</dbReference>
<dbReference type="Gene3D" id="3.40.10.10">
    <property type="entry name" value="DNA Methylphosphotriester Repair Domain"/>
    <property type="match status" value="1"/>
</dbReference>
<dbReference type="Gene3D" id="1.10.10.60">
    <property type="entry name" value="Homeodomain-like"/>
    <property type="match status" value="1"/>
</dbReference>
<dbReference type="Gene3D" id="3.30.160.70">
    <property type="entry name" value="Methylated DNA-protein cysteine methyltransferase domain"/>
    <property type="match status" value="1"/>
</dbReference>
<dbReference type="Gene3D" id="1.10.10.10">
    <property type="entry name" value="Winged helix-like DNA-binding domain superfamily/Winged helix DNA-binding domain"/>
    <property type="match status" value="1"/>
</dbReference>
<dbReference type="InterPro" id="IPR035451">
    <property type="entry name" value="Ada-like_dom_sf"/>
</dbReference>
<dbReference type="InterPro" id="IPR004026">
    <property type="entry name" value="Ada_DNA_repair_Zn-bd"/>
</dbReference>
<dbReference type="InterPro" id="IPR016221">
    <property type="entry name" value="Bifunct_regulatory_prot_Ada"/>
</dbReference>
<dbReference type="InterPro" id="IPR009057">
    <property type="entry name" value="Homeodomain-like_sf"/>
</dbReference>
<dbReference type="InterPro" id="IPR018060">
    <property type="entry name" value="HTH_AraC"/>
</dbReference>
<dbReference type="InterPro" id="IPR018062">
    <property type="entry name" value="HTH_AraC-typ_CS"/>
</dbReference>
<dbReference type="InterPro" id="IPR001497">
    <property type="entry name" value="MethylDNA_cys_MeTrfase_AS"/>
</dbReference>
<dbReference type="InterPro" id="IPR014048">
    <property type="entry name" value="MethylDNA_cys_MeTrfase_DNA-bd"/>
</dbReference>
<dbReference type="InterPro" id="IPR036217">
    <property type="entry name" value="MethylDNA_cys_MeTrfase_DNAb"/>
</dbReference>
<dbReference type="InterPro" id="IPR008332">
    <property type="entry name" value="MethylG_MeTrfase_N"/>
</dbReference>
<dbReference type="InterPro" id="IPR036631">
    <property type="entry name" value="MGMT_N_sf"/>
</dbReference>
<dbReference type="InterPro" id="IPR036388">
    <property type="entry name" value="WH-like_DNA-bd_sf"/>
</dbReference>
<dbReference type="NCBIfam" id="TIGR00589">
    <property type="entry name" value="ogt"/>
    <property type="match status" value="1"/>
</dbReference>
<dbReference type="NCBIfam" id="NF011964">
    <property type="entry name" value="PRK15435.1"/>
    <property type="match status" value="1"/>
</dbReference>
<dbReference type="PANTHER" id="PTHR10815:SF14">
    <property type="entry name" value="BIFUNCTIONAL TRANSCRIPTIONAL ACTIVATOR_DNA REPAIR ENZYME ADA"/>
    <property type="match status" value="1"/>
</dbReference>
<dbReference type="PANTHER" id="PTHR10815">
    <property type="entry name" value="METHYLATED-DNA--PROTEIN-CYSTEINE METHYLTRANSFERASE"/>
    <property type="match status" value="1"/>
</dbReference>
<dbReference type="Pfam" id="PF02805">
    <property type="entry name" value="Ada_Zn_binding"/>
    <property type="match status" value="1"/>
</dbReference>
<dbReference type="Pfam" id="PF01035">
    <property type="entry name" value="DNA_binding_1"/>
    <property type="match status" value="1"/>
</dbReference>
<dbReference type="Pfam" id="PF12833">
    <property type="entry name" value="HTH_18"/>
    <property type="match status" value="1"/>
</dbReference>
<dbReference type="Pfam" id="PF02870">
    <property type="entry name" value="Methyltransf_1N"/>
    <property type="match status" value="1"/>
</dbReference>
<dbReference type="PIRSF" id="PIRSF000409">
    <property type="entry name" value="Ada"/>
    <property type="match status" value="1"/>
</dbReference>
<dbReference type="SMART" id="SM00342">
    <property type="entry name" value="HTH_ARAC"/>
    <property type="match status" value="1"/>
</dbReference>
<dbReference type="SUPFAM" id="SSF57884">
    <property type="entry name" value="Ada DNA repair protein, N-terminal domain (N-Ada 10)"/>
    <property type="match status" value="1"/>
</dbReference>
<dbReference type="SUPFAM" id="SSF46689">
    <property type="entry name" value="Homeodomain-like"/>
    <property type="match status" value="1"/>
</dbReference>
<dbReference type="SUPFAM" id="SSF53155">
    <property type="entry name" value="Methylated DNA-protein cysteine methyltransferase domain"/>
    <property type="match status" value="1"/>
</dbReference>
<dbReference type="SUPFAM" id="SSF46767">
    <property type="entry name" value="Methylated DNA-protein cysteine methyltransferase, C-terminal domain"/>
    <property type="match status" value="1"/>
</dbReference>
<dbReference type="PROSITE" id="PS00041">
    <property type="entry name" value="HTH_ARAC_FAMILY_1"/>
    <property type="match status" value="2"/>
</dbReference>
<dbReference type="PROSITE" id="PS01124">
    <property type="entry name" value="HTH_ARAC_FAMILY_2"/>
    <property type="match status" value="1"/>
</dbReference>
<dbReference type="PROSITE" id="PS00374">
    <property type="entry name" value="MGMT"/>
    <property type="match status" value="1"/>
</dbReference>
<protein>
    <recommendedName>
        <fullName>Bifunctional transcriptional activator/DNA repair enzyme Ada</fullName>
    </recommendedName>
    <alternativeName>
        <fullName>Regulatory protein of adaptive response</fullName>
    </alternativeName>
    <domain>
        <recommendedName>
            <fullName>Methylphosphotriester-DNA--protein-cysteine S-methyltransferase</fullName>
            <ecNumber evidence="5">2.1.1.n11</ecNumber>
        </recommendedName>
        <alternativeName>
            <fullName>Methylphosphotriester-DNA methyltransferase</fullName>
        </alternativeName>
    </domain>
    <domain>
        <recommendedName>
            <fullName>Methylated-DNA--protein-cysteine methyltransferase</fullName>
            <ecNumber evidence="5">2.1.1.63</ecNumber>
        </recommendedName>
        <alternativeName>
            <fullName>O6-methylguanine-DNA alkyltransferase</fullName>
        </alternativeName>
    </domain>
</protein>
<gene>
    <name type="primary">ada</name>
    <name type="ordered locus">b2213</name>
    <name type="ordered locus">JW2201</name>
</gene>
<organism>
    <name type="scientific">Escherichia coli (strain K12)</name>
    <dbReference type="NCBI Taxonomy" id="83333"/>
    <lineage>
        <taxon>Bacteria</taxon>
        <taxon>Pseudomonadati</taxon>
        <taxon>Pseudomonadota</taxon>
        <taxon>Gammaproteobacteria</taxon>
        <taxon>Enterobacterales</taxon>
        <taxon>Enterobacteriaceae</taxon>
        <taxon>Escherichia</taxon>
    </lineage>
</organism>
<keyword id="KW-0002">3D-structure</keyword>
<keyword id="KW-0010">Activator</keyword>
<keyword id="KW-0903">Direct protein sequencing</keyword>
<keyword id="KW-0227">DNA damage</keyword>
<keyword id="KW-0234">DNA repair</keyword>
<keyword id="KW-0238">DNA-binding</keyword>
<keyword id="KW-0479">Metal-binding</keyword>
<keyword id="KW-0489">Methyltransferase</keyword>
<keyword id="KW-0511">Multifunctional enzyme</keyword>
<keyword id="KW-1185">Reference proteome</keyword>
<keyword id="KW-0804">Transcription</keyword>
<keyword id="KW-0805">Transcription regulation</keyword>
<keyword id="KW-0808">Transferase</keyword>
<keyword id="KW-0862">Zinc</keyword>
<name>ADA_ECOLI</name>
<feature type="chain" id="PRO_0000018747" description="Bifunctional transcriptional activator/DNA repair enzyme Ada">
    <location>
        <begin position="1"/>
        <end position="354"/>
    </location>
</feature>
<feature type="domain" description="HTH araC/xylS-type" evidence="1">
    <location>
        <begin position="85"/>
        <end position="183"/>
    </location>
</feature>
<feature type="DNA-binding region" description="H-T-H motif" evidence="1">
    <location>
        <begin position="102"/>
        <end position="121"/>
    </location>
</feature>
<feature type="region of interest" description="Methylphosphotriester-DNA--protein-cysteine methyltransferase">
    <location>
        <begin position="1"/>
        <end position="171"/>
    </location>
</feature>
<feature type="region of interest" description="Methylated-DNA--protein-cysteine methyltransferase">
    <location>
        <begin position="181"/>
        <end position="354"/>
    </location>
</feature>
<feature type="active site" description="Nucleophile; methyl group acceptor from methylphosphotriester" evidence="2 4">
    <location>
        <position position="38"/>
    </location>
</feature>
<feature type="active site" description="Nucleophile; methyl group acceptor from either O6-methylguanine or O4-methylthymine" evidence="2 3">
    <location>
        <position position="321"/>
    </location>
</feature>
<feature type="binding site" evidence="3">
    <location>
        <position position="34"/>
    </location>
    <ligand>
        <name>DNA</name>
        <dbReference type="ChEBI" id="CHEBI:16991"/>
    </ligand>
</feature>
<feature type="binding site">
    <location>
        <position position="38"/>
    </location>
    <ligand>
        <name>Zn(2+)</name>
        <dbReference type="ChEBI" id="CHEBI:29105"/>
    </ligand>
</feature>
<feature type="binding site">
    <location>
        <position position="42"/>
    </location>
    <ligand>
        <name>Zn(2+)</name>
        <dbReference type="ChEBI" id="CHEBI:29105"/>
    </ligand>
</feature>
<feature type="binding site" evidence="3">
    <location>
        <position position="43"/>
    </location>
    <ligand>
        <name>DNA</name>
        <dbReference type="ChEBI" id="CHEBI:16991"/>
    </ligand>
</feature>
<feature type="binding site" evidence="3">
    <location>
        <position position="45"/>
    </location>
    <ligand>
        <name>DNA</name>
        <dbReference type="ChEBI" id="CHEBI:16991"/>
    </ligand>
</feature>
<feature type="binding site" evidence="3">
    <location>
        <position position="67"/>
    </location>
    <ligand>
        <name>DNA</name>
        <dbReference type="ChEBI" id="CHEBI:16991"/>
    </ligand>
</feature>
<feature type="binding site">
    <location>
        <position position="69"/>
    </location>
    <ligand>
        <name>Zn(2+)</name>
        <dbReference type="ChEBI" id="CHEBI:29105"/>
    </ligand>
</feature>
<feature type="binding site">
    <location>
        <position position="72"/>
    </location>
    <ligand>
        <name>Zn(2+)</name>
        <dbReference type="ChEBI" id="CHEBI:29105"/>
    </ligand>
</feature>
<feature type="site" description="Cleavage">
    <location>
        <begin position="128"/>
        <end position="129"/>
    </location>
</feature>
<feature type="site" description="Cleavage">
    <location>
        <begin position="178"/>
        <end position="179"/>
    </location>
</feature>
<feature type="sequence variant" description="In strain: B.">
    <original>E</original>
    <variation>D</variation>
    <location>
        <position position="75"/>
    </location>
</feature>
<feature type="sequence variant" description="In strain: B.">
    <original>AQ</original>
    <variation>PR</variation>
    <location>
        <begin position="79"/>
        <end position="80"/>
    </location>
</feature>
<feature type="sequence variant" description="In strain: B.">
    <original>I</original>
    <variation>V</variation>
    <location>
        <position position="318"/>
    </location>
</feature>
<feature type="sequence variant" description="In strain: B.">
    <original>T</original>
    <variation>S</variation>
    <location>
        <position position="330"/>
    </location>
</feature>
<feature type="sequence conflict" description="In Ref. 1; AAA23412." evidence="7" ref="1">
    <original>A</original>
    <variation>R</variation>
    <location>
        <position position="134"/>
    </location>
</feature>
<feature type="strand" evidence="13">
    <location>
        <begin position="4"/>
        <end position="6"/>
    </location>
</feature>
<feature type="helix" evidence="11">
    <location>
        <begin position="9"/>
        <end position="17"/>
    </location>
</feature>
<feature type="helix" evidence="11">
    <location>
        <begin position="21"/>
        <end position="23"/>
    </location>
</feature>
<feature type="turn" evidence="9">
    <location>
        <begin position="24"/>
        <end position="26"/>
    </location>
</feature>
<feature type="strand" evidence="11">
    <location>
        <begin position="27"/>
        <end position="31"/>
    </location>
</feature>
<feature type="turn" evidence="11">
    <location>
        <begin position="32"/>
        <end position="34"/>
    </location>
</feature>
<feature type="strand" evidence="11">
    <location>
        <begin position="36"/>
        <end position="38"/>
    </location>
</feature>
<feature type="helix" evidence="11">
    <location>
        <begin position="49"/>
        <end position="51"/>
    </location>
</feature>
<feature type="strand" evidence="11">
    <location>
        <begin position="52"/>
        <end position="57"/>
    </location>
</feature>
<feature type="helix" evidence="11">
    <location>
        <begin position="58"/>
        <end position="63"/>
    </location>
</feature>
<feature type="strand" evidence="12">
    <location>
        <begin position="67"/>
        <end position="69"/>
    </location>
</feature>
<feature type="turn" evidence="11">
    <location>
        <begin position="70"/>
        <end position="72"/>
    </location>
</feature>
<feature type="strand" evidence="8">
    <location>
        <begin position="76"/>
        <end position="78"/>
    </location>
</feature>
<feature type="helix" evidence="11">
    <location>
        <begin position="79"/>
        <end position="93"/>
    </location>
</feature>
<feature type="strand" evidence="11">
    <location>
        <begin position="96"/>
        <end position="98"/>
    </location>
</feature>
<feature type="helix" evidence="11">
    <location>
        <begin position="102"/>
        <end position="109"/>
    </location>
</feature>
<feature type="helix" evidence="11">
    <location>
        <begin position="113"/>
        <end position="123"/>
    </location>
</feature>
<feature type="helix" evidence="11">
    <location>
        <begin position="128"/>
        <end position="137"/>
    </location>
</feature>
<feature type="turn" evidence="12">
    <location>
        <begin position="142"/>
        <end position="144"/>
    </location>
</feature>
<feature type="strand" evidence="10">
    <location>
        <begin position="190"/>
        <end position="196"/>
    </location>
</feature>
<feature type="strand" evidence="10">
    <location>
        <begin position="199"/>
        <end position="205"/>
    </location>
</feature>
<feature type="strand" evidence="10">
    <location>
        <begin position="207"/>
        <end position="217"/>
    </location>
</feature>
<feature type="helix" evidence="10">
    <location>
        <begin position="219"/>
        <end position="229"/>
    </location>
</feature>
<feature type="helix" evidence="10">
    <location>
        <begin position="240"/>
        <end position="254"/>
    </location>
</feature>
<feature type="strand" evidence="10">
    <location>
        <begin position="255"/>
        <end position="257"/>
    </location>
</feature>
<feature type="helix" evidence="10">
    <location>
        <begin position="270"/>
        <end position="279"/>
    </location>
</feature>
<feature type="helix" evidence="10">
    <location>
        <begin position="290"/>
        <end position="296"/>
    </location>
</feature>
<feature type="helix" evidence="10">
    <location>
        <begin position="303"/>
        <end position="311"/>
    </location>
</feature>
<feature type="helix" evidence="10">
    <location>
        <begin position="321"/>
        <end position="323"/>
    </location>
</feature>
<feature type="helix" evidence="10">
    <location>
        <begin position="338"/>
        <end position="348"/>
    </location>
</feature>
<proteinExistence type="evidence at protein level"/>
<sequence>MKKATCLTDDQRWQSVLARDPNADGEFVFAVRTTGIFCRPSCRARHALRENVSFYANASEALAAGFRPCKRCQPEKANAQQHRLDKITHACRLLEQETPVTLEALADQVAMSPFHLHRLFKATTGMTPKAWQQAWRARRLRESLAKGESVTTSILNAGFPDSSSYYRKADETLGMTAKQFRHGGENLAVRYALADCELGRCLVAESERGICAILLGDDDATLISELQQMFPAADNAPADLMFQQHVREVIASLNQRDTPLTLPLDIRGTAFQQQVWQALRTIPCGETVSYQQLANAIGKPKAVRAVASACAANKLAIIIPCHRVVRGDGTLSGYRWGVSRKAQLLRREAENEER</sequence>
<comment type="function">
    <text evidence="5">Involved in the adaptive response to alkylation damage in DNA caused by alkylating agents. Repairs O6-methylguanine (O6-MeG) and O4-methylthymine (O4-MeT) in DNA. Repairs the methylated nucleobase in DNA by stoichiometrically transferring the methyl group to a cysteine residue in the enzyme (Cys-321). Also specifically repairs the Sp diastereomer of DNA methylphosphotriester lesions by the same mechanism, although the methyl transfer occurs onto a different cysteine residue (Cys-38). Cannot demethylate the other diastereomer, Rp-methylphosphotriester. This is a suicide reaction: the enzyme is irreversibly inactivated.</text>
</comment>
<comment type="function">
    <text evidence="5">The methylation of Ada by methylphosphotriesters in DNA leads to its activation as a transcriptional regulator that activates the transcription of its own gene, ada, and other alkylation resistance genes, alkA, alkB and aidB.</text>
</comment>
<comment type="catalytic activity">
    <reaction evidence="5">
        <text>(2'-deoxyribonucleoside 5'-methylphosphotriester)-DNA + L-cysteinyl-[protein] = 2'-deoxyribonucleotide-DNA + S-methyl-L-cysteinyl-[protein] + H(+)</text>
        <dbReference type="Rhea" id="RHEA:56324"/>
        <dbReference type="Rhea" id="RHEA-COMP:10131"/>
        <dbReference type="Rhea" id="RHEA-COMP:10132"/>
        <dbReference type="Rhea" id="RHEA-COMP:14462"/>
        <dbReference type="Rhea" id="RHEA-COMP:14463"/>
        <dbReference type="ChEBI" id="CHEBI:15378"/>
        <dbReference type="ChEBI" id="CHEBI:29950"/>
        <dbReference type="ChEBI" id="CHEBI:82612"/>
        <dbReference type="ChEBI" id="CHEBI:140284"/>
        <dbReference type="ChEBI" id="CHEBI:140286"/>
        <dbReference type="EC" id="2.1.1.n11"/>
    </reaction>
</comment>
<comment type="catalytic activity">
    <reaction evidence="2 5">
        <text>a 6-O-methyl-2'-deoxyguanosine in DNA + L-cysteinyl-[protein] = S-methyl-L-cysteinyl-[protein] + a 2'-deoxyguanosine in DNA</text>
        <dbReference type="Rhea" id="RHEA:24000"/>
        <dbReference type="Rhea" id="RHEA-COMP:10131"/>
        <dbReference type="Rhea" id="RHEA-COMP:10132"/>
        <dbReference type="Rhea" id="RHEA-COMP:11367"/>
        <dbReference type="Rhea" id="RHEA-COMP:11368"/>
        <dbReference type="ChEBI" id="CHEBI:29950"/>
        <dbReference type="ChEBI" id="CHEBI:82612"/>
        <dbReference type="ChEBI" id="CHEBI:85445"/>
        <dbReference type="ChEBI" id="CHEBI:85448"/>
        <dbReference type="EC" id="2.1.1.63"/>
    </reaction>
</comment>
<comment type="catalytic activity">
    <reaction evidence="2 5">
        <text>a 4-O-methyl-thymidine in DNA + L-cysteinyl-[protein] = a thymidine in DNA + S-methyl-L-cysteinyl-[protein]</text>
        <dbReference type="Rhea" id="RHEA:53428"/>
        <dbReference type="Rhea" id="RHEA-COMP:10131"/>
        <dbReference type="Rhea" id="RHEA-COMP:10132"/>
        <dbReference type="Rhea" id="RHEA-COMP:13555"/>
        <dbReference type="Rhea" id="RHEA-COMP:13556"/>
        <dbReference type="ChEBI" id="CHEBI:29950"/>
        <dbReference type="ChEBI" id="CHEBI:82612"/>
        <dbReference type="ChEBI" id="CHEBI:137386"/>
        <dbReference type="ChEBI" id="CHEBI:137387"/>
        <dbReference type="EC" id="2.1.1.63"/>
    </reaction>
</comment>
<comment type="cofactor">
    <cofactor>
        <name>Zn(2+)</name>
        <dbReference type="ChEBI" id="CHEBI:29105"/>
    </cofactor>
    <text>Binds 1 zinc ion per subunit.</text>
</comment>
<comment type="interaction">
    <interactant intactId="EBI-1119501">
        <id>P06134</id>
    </interactant>
    <interactant intactId="EBI-545453">
        <id>P69931</id>
        <label>hda</label>
    </interactant>
    <organismsDiffer>false</organismsDiffer>
    <experiments>3</experiments>
</comment>
<comment type="induction">
    <text>Up-regulated by methylated Ada itself in response to the exposure to alkylating agents.</text>
</comment>
<comment type="domain">
    <text evidence="6">Consists of two domains. The 20 kDa N-terminal domain repairs the Sp diastereomer of methylphosphotriesters and, in its methylated form, binds DNA in a sequence-specific manner. The 19 kDa C-terminal domain repairs the mutagenic lesions O6-methylguanine. Each domain retains its activity when separated form the other.</text>
</comment>
<comment type="miscellaneous">
    <text>This enzyme catalyzes only one turnover and therefore is not strictly catalytic. According to one definition, an enzyme is a biocatalyst that acts repeatedly and over many reaction cycles.</text>
</comment>
<comment type="similarity">
    <text evidence="7">In the C-terminal section; belongs to the MGMT family.</text>
</comment>
<accession>P06134</accession>
<accession>Q47032</accession>
<evidence type="ECO:0000255" key="1">
    <source>
        <dbReference type="PROSITE-ProRule" id="PRU00593"/>
    </source>
</evidence>
<evidence type="ECO:0000255" key="2">
    <source>
        <dbReference type="PROSITE-ProRule" id="PRU10017"/>
    </source>
</evidence>
<evidence type="ECO:0000269" key="3">
    <source>
    </source>
</evidence>
<evidence type="ECO:0000269" key="4">
    <source>
    </source>
</evidence>
<evidence type="ECO:0000269" key="5">
    <source>
    </source>
</evidence>
<evidence type="ECO:0000269" key="6">
    <source>
    </source>
</evidence>
<evidence type="ECO:0000305" key="7"/>
<evidence type="ECO:0007829" key="8">
    <source>
        <dbReference type="PDB" id="1ADN"/>
    </source>
</evidence>
<evidence type="ECO:0007829" key="9">
    <source>
        <dbReference type="PDB" id="1EYF"/>
    </source>
</evidence>
<evidence type="ECO:0007829" key="10">
    <source>
        <dbReference type="PDB" id="1SFE"/>
    </source>
</evidence>
<evidence type="ECO:0007829" key="11">
    <source>
        <dbReference type="PDB" id="1U8B"/>
    </source>
</evidence>
<evidence type="ECO:0007829" key="12">
    <source>
        <dbReference type="PDB" id="1WPK"/>
    </source>
</evidence>
<evidence type="ECO:0007829" key="13">
    <source>
        <dbReference type="PDB" id="1ZGW"/>
    </source>
</evidence>
<reference key="1">
    <citation type="journal article" date="1985" name="J. Biol. Chem.">
        <title>Purification and structure of the intact Ada regulatory protein of Escherichia coli K12, O6-methylguanine-DNA methyltransferase.</title>
        <authorList>
            <person name="Nakabeppu Y."/>
            <person name="Kondo H."/>
            <person name="Kawabata S."/>
            <person name="Iwanaga S."/>
            <person name="Sekiguchi M."/>
        </authorList>
    </citation>
    <scope>NUCLEOTIDE SEQUENCE [GENOMIC DNA]</scope>
    <scope>PARTIAL PROTEIN SEQUENCE</scope>
    <source>
        <strain>K12</strain>
    </source>
</reference>
<reference key="2">
    <citation type="journal article" date="1985" name="Proc. Natl. Acad. Sci. U.S.A.">
        <title>Active site and complete sequence of the suicidal methyltransferase that counters alkylation mutagenesis.</title>
        <authorList>
            <person name="Demple B."/>
            <person name="Sedgwick B."/>
            <person name="Robins P."/>
            <person name="Totty N."/>
            <person name="Waterfield M.D."/>
            <person name="Lindahl T."/>
        </authorList>
    </citation>
    <scope>NUCLEOTIDE SEQUENCE [GENOMIC DNA]</scope>
    <source>
        <strain>B</strain>
    </source>
</reference>
<reference key="3">
    <citation type="submission" date="1993-10" db="EMBL/GenBank/DDBJ databases">
        <title>Automated multiplex sequencing of the E.coli genome.</title>
        <authorList>
            <person name="Richterich P."/>
            <person name="Lakey N."/>
            <person name="Gryan G."/>
            <person name="Jaehn L."/>
            <person name="Mintz L."/>
            <person name="Robison K."/>
            <person name="Church G.M."/>
        </authorList>
    </citation>
    <scope>NUCLEOTIDE SEQUENCE [LARGE SCALE GENOMIC DNA]</scope>
    <source>
        <strain>K12 / BHB2600</strain>
    </source>
</reference>
<reference key="4">
    <citation type="journal article" date="1996" name="DNA Res.">
        <title>A 460-kb DNA sequence of the Escherichia coli K-12 genome corresponding to the 40.1-50.0 min region on the linkage map.</title>
        <authorList>
            <person name="Itoh T."/>
            <person name="Aiba H."/>
            <person name="Baba T."/>
            <person name="Fujita K."/>
            <person name="Hayashi K."/>
            <person name="Inada T."/>
            <person name="Isono K."/>
            <person name="Kasai H."/>
            <person name="Kimura S."/>
            <person name="Kitakawa M."/>
            <person name="Kitagawa M."/>
            <person name="Makino K."/>
            <person name="Miki T."/>
            <person name="Mizobuchi K."/>
            <person name="Mori H."/>
            <person name="Mori T."/>
            <person name="Motomura K."/>
            <person name="Nakade S."/>
            <person name="Nakamura Y."/>
            <person name="Nashimoto H."/>
            <person name="Nishio Y."/>
            <person name="Oshima T."/>
            <person name="Saito N."/>
            <person name="Sampei G."/>
            <person name="Seki Y."/>
            <person name="Sivasundaram S."/>
            <person name="Tagami H."/>
            <person name="Takeda J."/>
            <person name="Takemoto K."/>
            <person name="Wada C."/>
            <person name="Yamamoto Y."/>
            <person name="Horiuchi T."/>
        </authorList>
    </citation>
    <scope>NUCLEOTIDE SEQUENCE [LARGE SCALE GENOMIC DNA]</scope>
    <source>
        <strain>K12 / W3110 / ATCC 27325 / DSM 5911</strain>
    </source>
</reference>
<reference key="5">
    <citation type="journal article" date="1997" name="Science">
        <title>The complete genome sequence of Escherichia coli K-12.</title>
        <authorList>
            <person name="Blattner F.R."/>
            <person name="Plunkett G. III"/>
            <person name="Bloch C.A."/>
            <person name="Perna N.T."/>
            <person name="Burland V."/>
            <person name="Riley M."/>
            <person name="Collado-Vides J."/>
            <person name="Glasner J.D."/>
            <person name="Rode C.K."/>
            <person name="Mayhew G.F."/>
            <person name="Gregor J."/>
            <person name="Davis N.W."/>
            <person name="Kirkpatrick H.A."/>
            <person name="Goeden M.A."/>
            <person name="Rose D.J."/>
            <person name="Mau B."/>
            <person name="Shao Y."/>
        </authorList>
    </citation>
    <scope>NUCLEOTIDE SEQUENCE [LARGE SCALE GENOMIC DNA]</scope>
    <source>
        <strain>K12 / MG1655 / ATCC 47076</strain>
    </source>
</reference>
<reference key="6">
    <citation type="journal article" date="2006" name="Mol. Syst. Biol.">
        <title>Highly accurate genome sequences of Escherichia coli K-12 strains MG1655 and W3110.</title>
        <authorList>
            <person name="Hayashi K."/>
            <person name="Morooka N."/>
            <person name="Yamamoto Y."/>
            <person name="Fujita K."/>
            <person name="Isono K."/>
            <person name="Choi S."/>
            <person name="Ohtsubo E."/>
            <person name="Baba T."/>
            <person name="Wanner B.L."/>
            <person name="Mori H."/>
            <person name="Horiuchi T."/>
        </authorList>
    </citation>
    <scope>NUCLEOTIDE SEQUENCE [LARGE SCALE GENOMIC DNA]</scope>
    <source>
        <strain>K12 / W3110 / ATCC 27325 / DSM 5911</strain>
    </source>
</reference>
<reference key="7">
    <citation type="journal article" date="1985" name="J. Bacteriol.">
        <title>Induction and autoregulation of ada, a positively acting element regulating the response of Escherichia coli K-12 to methylating agents.</title>
        <authorList>
            <person name="Lemotte P.K."/>
            <person name="Walker G.C."/>
        </authorList>
    </citation>
    <scope>NUCLEOTIDE SEQUENCE [GENOMIC DNA] OF 1-49</scope>
    <source>
        <strain>K12</strain>
    </source>
</reference>
<reference key="8">
    <citation type="journal article" date="1986" name="J. Biol. Chem.">
        <title>Structure and expression of the alkB gene of Escherichia coli related to the repair of alkylated DNA.</title>
        <authorList>
            <person name="Kondo H."/>
            <person name="Nakabeppu Y."/>
            <person name="Kataoka H."/>
            <person name="Kuhara S."/>
            <person name="Kawabata S."/>
            <person name="Sekiguchi M."/>
        </authorList>
    </citation>
    <scope>NUCLEOTIDE SEQUENCE [GENOMIC DNA] OF 287-354</scope>
</reference>
<reference key="9">
    <citation type="journal article" date="1986" name="Cell">
        <title>The intracellular signal for induction of resistance to alkylating agents in E. coli.</title>
        <authorList>
            <person name="Teo I."/>
            <person name="Sedgwick B."/>
            <person name="Kilpatrick M.W."/>
            <person name="McCarthy T.V."/>
            <person name="Lindahl T."/>
        </authorList>
    </citation>
    <scope>NUCLEOTIDE SEQUENCE [GENOMIC DNA] OF 1-29</scope>
</reference>
<reference key="10">
    <citation type="journal article" date="1986" name="Proc. Natl. Acad. Sci. U.S.A.">
        <title>Regulatory mechanisms for induction of synthesis of repair enzymes in response to alkylating agents: ada protein acts as a transcriptional regulator.</title>
        <authorList>
            <person name="Nakabeppu Y."/>
            <person name="Sekiguchi M."/>
        </authorList>
    </citation>
    <scope>NUCLEOTIDE SEQUENCE [GENOMIC DNA] OF 1-27</scope>
</reference>
<reference key="11">
    <citation type="journal article" date="1985" name="Nucleic Acids Res.">
        <title>Methyl phosphotriesters in alkylated DNA are repaired by the Ada regulatory protein of E. coli.</title>
        <authorList>
            <person name="McCarthy T.V."/>
            <person name="Lindahl T."/>
        </authorList>
    </citation>
    <scope>FUNCTION</scope>
    <scope>CATALYTIC ACTIVITY</scope>
</reference>
<reference key="12">
    <citation type="journal article" date="1988" name="J. Biol. Chem.">
        <title>Functional domains and methyl acceptor sites of the Escherichia coli Ada protein.</title>
        <authorList>
            <person name="Sedgwick B."/>
            <person name="Robins P."/>
            <person name="Totty N."/>
            <person name="Lindahl T."/>
        </authorList>
    </citation>
    <scope>DOMAIN</scope>
</reference>
<reference key="13">
    <citation type="journal article" date="1992" name="Biochemistry">
        <title>Zinc binding by the methylation signaling domain of the Escherichia coli Ada protein.</title>
        <authorList>
            <person name="Myers L.C."/>
            <person name="Terranova M.P."/>
            <person name="Nash H.M."/>
            <person name="Markus M.A."/>
            <person name="Verdine G.L."/>
        </authorList>
    </citation>
    <scope>ZINC-BINDING</scope>
</reference>
<reference key="14">
    <citation type="journal article" date="1994" name="Nucleic Acids Res.">
        <title>Specificities of human, rat and E. coli O6-methylguanine-DNA methyltransferases towards the repair of O6-methyl and O6-ethylguanine in DNA.</title>
        <authorList>
            <person name="Liem L.-K."/>
            <person name="Lim A."/>
            <person name="Li B.F.L."/>
        </authorList>
    </citation>
    <scope>CHARACTERIZATION</scope>
</reference>
<reference key="15">
    <citation type="journal article" date="1997" name="Electrophoresis">
        <title>Escherichia coli proteome analysis using the gene-protein database.</title>
        <authorList>
            <person name="VanBogelen R.A."/>
            <person name="Abshire K.Z."/>
            <person name="Moldover B."/>
            <person name="Olson E.R."/>
            <person name="Neidhardt F.C."/>
        </authorList>
    </citation>
    <scope>IDENTIFICATION BY 2D-GEL</scope>
</reference>
<reference key="16">
    <citation type="journal article" date="1993" name="FEBS Lett.">
        <title>Folding topology and DNA binding of the N-terminal fragment of Ada protein.</title>
        <authorList>
            <person name="Sakashita H."/>
            <person name="Sakuma T."/>
            <person name="Ohkubo T."/>
            <person name="Kainosho M."/>
            <person name="Sakumi K."/>
            <person name="Sekiguchi M."/>
            <person name="Morikawa K."/>
        </authorList>
    </citation>
    <scope>STRUCTURE BY NMR OF 1-129</scope>
</reference>
<reference key="17">
    <citation type="journal article" date="1993" name="Science">
        <title>Repair of DNA methylphosphotriesters through a metalloactivated cysteine nucleophile.</title>
        <authorList>
            <person name="Myers L.C."/>
            <person name="Terranova M.P."/>
            <person name="Ferentz A.E."/>
            <person name="Wagner G."/>
            <person name="Verdine G.L."/>
        </authorList>
    </citation>
    <scope>STRUCTURE BY NMR OF 1-92 IN COMPLEX WITH ZINC IONS</scope>
</reference>
<reference key="18">
    <citation type="journal article" date="1994" name="EMBO J.">
        <title>Crystal structure of a suicidal DNA repair protein: the Ada O6-methylguanine-DNA methyltransferase from E. coli.</title>
        <authorList>
            <person name="Moore M.H."/>
            <person name="Gulbis J.M."/>
            <person name="Dodson E.J."/>
            <person name="Demple B."/>
            <person name="Moody P.C.E."/>
        </authorList>
    </citation>
    <scope>X-RAY CRYSTALLOGRAPHY (2.1 ANGSTROMS) OF 175-354</scope>
    <source>
        <strain>B</strain>
    </source>
</reference>
<reference key="19">
    <citation type="journal article" date="2001" name="Biochemistry">
        <title>Structural basis for the functional switch of the E. coli Ada protein.</title>
        <authorList>
            <person name="Lin Y."/>
            <person name="Doetsch V."/>
            <person name="Wintner T."/>
            <person name="Peariso K."/>
            <person name="Myers L.C."/>
            <person name="Penner-Hahn J.E."/>
            <person name="Verdine G.L."/>
            <person name="Wagner G."/>
        </authorList>
    </citation>
    <scope>STRUCTURE BY NMR OF 1-92 IN COMPLEX WITH ZINC IONS</scope>
    <scope>INTERACTION WITH DNA</scope>
</reference>
<reference key="20">
    <citation type="journal article" date="2005" name="Mol. Cell">
        <title>A methylation-dependent electrostatic switch controls DNA repair and transcriptional activation by E. coli ada.</title>
        <authorList>
            <person name="He C."/>
            <person name="Hus J.-C."/>
            <person name="Sun L.J."/>
            <person name="Zhou P."/>
            <person name="Norman D.P.G."/>
            <person name="Doetsch V."/>
            <person name="Wei H."/>
            <person name="Gross J.D."/>
            <person name="Lane W.S."/>
            <person name="Wagner G."/>
            <person name="Verdine G.L."/>
        </authorList>
    </citation>
    <scope>X-RAY CRYSTALLOGRAPHY (2.1 ANGSTROMS) OF 9-139 IN COMPLEX WITH DNA AND ZINC IONS</scope>
    <scope>STRUCTURE BY NMR OF 9-139</scope>
    <scope>IDENTIFICATION BY MASS SPECTROMETRY</scope>
    <scope>ACTIVE SITE</scope>
</reference>
<reference key="21">
    <citation type="journal article" date="2006" name="Protein Sci.">
        <title>The solution structure of the methylated form of the N-terminal 16-kDa domain of Escherichia coli Ada protein.</title>
        <authorList>
            <person name="Takinowaki H."/>
            <person name="Matsuda Y."/>
            <person name="Yoshida T."/>
            <person name="Kobayashi Y."/>
            <person name="Ohkubo T."/>
        </authorList>
    </citation>
    <scope>STRUCTURE BY NMR OF 1-146 IN COMPLEX WITH ZINC IONS</scope>
    <scope>IDENTIFICATION BY MASS SPECTROMETRY</scope>
    <scope>ACTIVE SITE CYS-38</scope>
</reference>